<name>SYK_PROM5</name>
<feature type="chain" id="PRO_1000012904" description="Lysine--tRNA ligase">
    <location>
        <begin position="1"/>
        <end position="512"/>
    </location>
</feature>
<feature type="binding site" evidence="1">
    <location>
        <position position="408"/>
    </location>
    <ligand>
        <name>Mg(2+)</name>
        <dbReference type="ChEBI" id="CHEBI:18420"/>
        <label>1</label>
    </ligand>
</feature>
<feature type="binding site" evidence="1">
    <location>
        <position position="415"/>
    </location>
    <ligand>
        <name>Mg(2+)</name>
        <dbReference type="ChEBI" id="CHEBI:18420"/>
        <label>1</label>
    </ligand>
</feature>
<feature type="binding site" evidence="1">
    <location>
        <position position="415"/>
    </location>
    <ligand>
        <name>Mg(2+)</name>
        <dbReference type="ChEBI" id="CHEBI:18420"/>
        <label>2</label>
    </ligand>
</feature>
<reference key="1">
    <citation type="journal article" date="2007" name="PLoS Genet.">
        <title>Patterns and implications of gene gain and loss in the evolution of Prochlorococcus.</title>
        <authorList>
            <person name="Kettler G.C."/>
            <person name="Martiny A.C."/>
            <person name="Huang K."/>
            <person name="Zucker J."/>
            <person name="Coleman M.L."/>
            <person name="Rodrigue S."/>
            <person name="Chen F."/>
            <person name="Lapidus A."/>
            <person name="Ferriera S."/>
            <person name="Johnson J."/>
            <person name="Steglich C."/>
            <person name="Church G.M."/>
            <person name="Richardson P."/>
            <person name="Chisholm S.W."/>
        </authorList>
    </citation>
    <scope>NUCLEOTIDE SEQUENCE [LARGE SCALE GENOMIC DNA]</scope>
    <source>
        <strain>MIT 9515</strain>
    </source>
</reference>
<accession>A2BZ03</accession>
<organism>
    <name type="scientific">Prochlorococcus marinus (strain MIT 9515)</name>
    <dbReference type="NCBI Taxonomy" id="167542"/>
    <lineage>
        <taxon>Bacteria</taxon>
        <taxon>Bacillati</taxon>
        <taxon>Cyanobacteriota</taxon>
        <taxon>Cyanophyceae</taxon>
        <taxon>Synechococcales</taxon>
        <taxon>Prochlorococcaceae</taxon>
        <taxon>Prochlorococcus</taxon>
    </lineage>
</organism>
<keyword id="KW-0030">Aminoacyl-tRNA synthetase</keyword>
<keyword id="KW-0067">ATP-binding</keyword>
<keyword id="KW-0963">Cytoplasm</keyword>
<keyword id="KW-0436">Ligase</keyword>
<keyword id="KW-0460">Magnesium</keyword>
<keyword id="KW-0479">Metal-binding</keyword>
<keyword id="KW-0547">Nucleotide-binding</keyword>
<keyword id="KW-0648">Protein biosynthesis</keyword>
<sequence length="512" mass="58872">MSEIREARLLKANSLINKGFEPYAETFKISHSTRFLNEKFGYLDNGQEFDLNVSLAGRVLAKRVMGKIAFFTITDQEGKIQLYLEKRIIDDYEINAKLLSFEDLKEIVDIGDWIGVFGTIKKTNKGELSIKVSKWEMLSKSLQPLPDKWHGLTDIEKRYRQRYLDLIVNPLSKTVFKTRAKCISLIRRWLDEKNFLEIETPILQSEAGGAEARPFITHHNTLDIPLYLRIATELHLKRMVVGGFEKVYELGRIFRNEGVSTKHNPEFTSVEIYQAFSNYIDMMNLTEDLIKNIVLSCCDSLVINYQDKVIDFSKPWKRISMKNVVKEYTGIDFDSFDGDLNKAKKFSEEINIEISPKINTLGRLLNEVFEQKVESQLIEPTFVTDYPIEISPLARRHPKNKEMVQRFELFIAGRELANAFSELIDPVDQRQRMQLQQSLRDAGDLEAHCIDEDFLQALEIGMPPTGGLGIGIDRLVMLLTNSSSIRDVIPFPLLKPELTSNKSEKSTSNEVK</sequence>
<gene>
    <name evidence="1" type="primary">lysS</name>
    <name type="ordered locus">P9515_18071</name>
</gene>
<proteinExistence type="inferred from homology"/>
<comment type="catalytic activity">
    <reaction evidence="1">
        <text>tRNA(Lys) + L-lysine + ATP = L-lysyl-tRNA(Lys) + AMP + diphosphate</text>
        <dbReference type="Rhea" id="RHEA:20792"/>
        <dbReference type="Rhea" id="RHEA-COMP:9696"/>
        <dbReference type="Rhea" id="RHEA-COMP:9697"/>
        <dbReference type="ChEBI" id="CHEBI:30616"/>
        <dbReference type="ChEBI" id="CHEBI:32551"/>
        <dbReference type="ChEBI" id="CHEBI:33019"/>
        <dbReference type="ChEBI" id="CHEBI:78442"/>
        <dbReference type="ChEBI" id="CHEBI:78529"/>
        <dbReference type="ChEBI" id="CHEBI:456215"/>
        <dbReference type="EC" id="6.1.1.6"/>
    </reaction>
</comment>
<comment type="cofactor">
    <cofactor evidence="1">
        <name>Mg(2+)</name>
        <dbReference type="ChEBI" id="CHEBI:18420"/>
    </cofactor>
    <text evidence="1">Binds 3 Mg(2+) ions per subunit.</text>
</comment>
<comment type="subunit">
    <text evidence="1">Homodimer.</text>
</comment>
<comment type="subcellular location">
    <subcellularLocation>
        <location evidence="1">Cytoplasm</location>
    </subcellularLocation>
</comment>
<comment type="similarity">
    <text evidence="1">Belongs to the class-II aminoacyl-tRNA synthetase family.</text>
</comment>
<dbReference type="EC" id="6.1.1.6" evidence="1"/>
<dbReference type="EMBL" id="CP000552">
    <property type="protein sequence ID" value="ABM73014.1"/>
    <property type="molecule type" value="Genomic_DNA"/>
</dbReference>
<dbReference type="RefSeq" id="WP_011821099.1">
    <property type="nucleotide sequence ID" value="NC_008817.1"/>
</dbReference>
<dbReference type="SMR" id="A2BZ03"/>
<dbReference type="STRING" id="167542.P9515_18071"/>
<dbReference type="GeneID" id="60201511"/>
<dbReference type="KEGG" id="pmc:P9515_18071"/>
<dbReference type="eggNOG" id="COG1190">
    <property type="taxonomic scope" value="Bacteria"/>
</dbReference>
<dbReference type="HOGENOM" id="CLU_008255_6_0_3"/>
<dbReference type="OrthoDB" id="9802326at2"/>
<dbReference type="Proteomes" id="UP000001589">
    <property type="component" value="Chromosome"/>
</dbReference>
<dbReference type="GO" id="GO:0005829">
    <property type="term" value="C:cytosol"/>
    <property type="evidence" value="ECO:0007669"/>
    <property type="project" value="TreeGrafter"/>
</dbReference>
<dbReference type="GO" id="GO:0005524">
    <property type="term" value="F:ATP binding"/>
    <property type="evidence" value="ECO:0007669"/>
    <property type="project" value="UniProtKB-UniRule"/>
</dbReference>
<dbReference type="GO" id="GO:0004824">
    <property type="term" value="F:lysine-tRNA ligase activity"/>
    <property type="evidence" value="ECO:0007669"/>
    <property type="project" value="UniProtKB-UniRule"/>
</dbReference>
<dbReference type="GO" id="GO:0000287">
    <property type="term" value="F:magnesium ion binding"/>
    <property type="evidence" value="ECO:0007669"/>
    <property type="project" value="UniProtKB-UniRule"/>
</dbReference>
<dbReference type="GO" id="GO:0000049">
    <property type="term" value="F:tRNA binding"/>
    <property type="evidence" value="ECO:0007669"/>
    <property type="project" value="TreeGrafter"/>
</dbReference>
<dbReference type="GO" id="GO:0006430">
    <property type="term" value="P:lysyl-tRNA aminoacylation"/>
    <property type="evidence" value="ECO:0007669"/>
    <property type="project" value="UniProtKB-UniRule"/>
</dbReference>
<dbReference type="CDD" id="cd00775">
    <property type="entry name" value="LysRS_core"/>
    <property type="match status" value="1"/>
</dbReference>
<dbReference type="CDD" id="cd04322">
    <property type="entry name" value="LysRS_N"/>
    <property type="match status" value="1"/>
</dbReference>
<dbReference type="Gene3D" id="3.30.930.10">
    <property type="entry name" value="Bira Bifunctional Protein, Domain 2"/>
    <property type="match status" value="1"/>
</dbReference>
<dbReference type="Gene3D" id="2.40.50.140">
    <property type="entry name" value="Nucleic acid-binding proteins"/>
    <property type="match status" value="1"/>
</dbReference>
<dbReference type="HAMAP" id="MF_00252">
    <property type="entry name" value="Lys_tRNA_synth_class2"/>
    <property type="match status" value="1"/>
</dbReference>
<dbReference type="InterPro" id="IPR004364">
    <property type="entry name" value="Aa-tRNA-synt_II"/>
</dbReference>
<dbReference type="InterPro" id="IPR006195">
    <property type="entry name" value="aa-tRNA-synth_II"/>
</dbReference>
<dbReference type="InterPro" id="IPR045864">
    <property type="entry name" value="aa-tRNA-synth_II/BPL/LPL"/>
</dbReference>
<dbReference type="InterPro" id="IPR002313">
    <property type="entry name" value="Lys-tRNA-ligase_II"/>
</dbReference>
<dbReference type="InterPro" id="IPR044136">
    <property type="entry name" value="Lys-tRNA-ligase_II_N"/>
</dbReference>
<dbReference type="InterPro" id="IPR018149">
    <property type="entry name" value="Lys-tRNA-synth_II_C"/>
</dbReference>
<dbReference type="InterPro" id="IPR012340">
    <property type="entry name" value="NA-bd_OB-fold"/>
</dbReference>
<dbReference type="InterPro" id="IPR004365">
    <property type="entry name" value="NA-bd_OB_tRNA"/>
</dbReference>
<dbReference type="NCBIfam" id="TIGR00499">
    <property type="entry name" value="lysS_bact"/>
    <property type="match status" value="1"/>
</dbReference>
<dbReference type="NCBIfam" id="NF001756">
    <property type="entry name" value="PRK00484.1"/>
    <property type="match status" value="1"/>
</dbReference>
<dbReference type="PANTHER" id="PTHR42918:SF15">
    <property type="entry name" value="LYSINE--TRNA LIGASE, CHLOROPLASTIC_MITOCHONDRIAL"/>
    <property type="match status" value="1"/>
</dbReference>
<dbReference type="PANTHER" id="PTHR42918">
    <property type="entry name" value="LYSYL-TRNA SYNTHETASE"/>
    <property type="match status" value="1"/>
</dbReference>
<dbReference type="Pfam" id="PF00152">
    <property type="entry name" value="tRNA-synt_2"/>
    <property type="match status" value="1"/>
</dbReference>
<dbReference type="Pfam" id="PF01336">
    <property type="entry name" value="tRNA_anti-codon"/>
    <property type="match status" value="1"/>
</dbReference>
<dbReference type="PRINTS" id="PR00982">
    <property type="entry name" value="TRNASYNTHLYS"/>
</dbReference>
<dbReference type="SUPFAM" id="SSF55681">
    <property type="entry name" value="Class II aaRS and biotin synthetases"/>
    <property type="match status" value="1"/>
</dbReference>
<dbReference type="SUPFAM" id="SSF50249">
    <property type="entry name" value="Nucleic acid-binding proteins"/>
    <property type="match status" value="1"/>
</dbReference>
<dbReference type="PROSITE" id="PS50862">
    <property type="entry name" value="AA_TRNA_LIGASE_II"/>
    <property type="match status" value="1"/>
</dbReference>
<evidence type="ECO:0000255" key="1">
    <source>
        <dbReference type="HAMAP-Rule" id="MF_00252"/>
    </source>
</evidence>
<protein>
    <recommendedName>
        <fullName evidence="1">Lysine--tRNA ligase</fullName>
        <ecNumber evidence="1">6.1.1.6</ecNumber>
    </recommendedName>
    <alternativeName>
        <fullName evidence="1">Lysyl-tRNA synthetase</fullName>
        <shortName evidence="1">LysRS</shortName>
    </alternativeName>
</protein>